<proteinExistence type="evidence at protein level"/>
<organism>
    <name type="scientific">Mus musculus</name>
    <name type="common">Mouse</name>
    <dbReference type="NCBI Taxonomy" id="10090"/>
    <lineage>
        <taxon>Eukaryota</taxon>
        <taxon>Metazoa</taxon>
        <taxon>Chordata</taxon>
        <taxon>Craniata</taxon>
        <taxon>Vertebrata</taxon>
        <taxon>Euteleostomi</taxon>
        <taxon>Mammalia</taxon>
        <taxon>Eutheria</taxon>
        <taxon>Euarchontoglires</taxon>
        <taxon>Glires</taxon>
        <taxon>Rodentia</taxon>
        <taxon>Myomorpha</taxon>
        <taxon>Muroidea</taxon>
        <taxon>Muridae</taxon>
        <taxon>Murinae</taxon>
        <taxon>Mus</taxon>
        <taxon>Mus</taxon>
    </lineage>
</organism>
<reference key="1">
    <citation type="journal article" date="2005" name="Science">
        <title>The transcriptional landscape of the mammalian genome.</title>
        <authorList>
            <person name="Carninci P."/>
            <person name="Kasukawa T."/>
            <person name="Katayama S."/>
            <person name="Gough J."/>
            <person name="Frith M.C."/>
            <person name="Maeda N."/>
            <person name="Oyama R."/>
            <person name="Ravasi T."/>
            <person name="Lenhard B."/>
            <person name="Wells C."/>
            <person name="Kodzius R."/>
            <person name="Shimokawa K."/>
            <person name="Bajic V.B."/>
            <person name="Brenner S.E."/>
            <person name="Batalov S."/>
            <person name="Forrest A.R."/>
            <person name="Zavolan M."/>
            <person name="Davis M.J."/>
            <person name="Wilming L.G."/>
            <person name="Aidinis V."/>
            <person name="Allen J.E."/>
            <person name="Ambesi-Impiombato A."/>
            <person name="Apweiler R."/>
            <person name="Aturaliya R.N."/>
            <person name="Bailey T.L."/>
            <person name="Bansal M."/>
            <person name="Baxter L."/>
            <person name="Beisel K.W."/>
            <person name="Bersano T."/>
            <person name="Bono H."/>
            <person name="Chalk A.M."/>
            <person name="Chiu K.P."/>
            <person name="Choudhary V."/>
            <person name="Christoffels A."/>
            <person name="Clutterbuck D.R."/>
            <person name="Crowe M.L."/>
            <person name="Dalla E."/>
            <person name="Dalrymple B.P."/>
            <person name="de Bono B."/>
            <person name="Della Gatta G."/>
            <person name="di Bernardo D."/>
            <person name="Down T."/>
            <person name="Engstrom P."/>
            <person name="Fagiolini M."/>
            <person name="Faulkner G."/>
            <person name="Fletcher C.F."/>
            <person name="Fukushima T."/>
            <person name="Furuno M."/>
            <person name="Futaki S."/>
            <person name="Gariboldi M."/>
            <person name="Georgii-Hemming P."/>
            <person name="Gingeras T.R."/>
            <person name="Gojobori T."/>
            <person name="Green R.E."/>
            <person name="Gustincich S."/>
            <person name="Harbers M."/>
            <person name="Hayashi Y."/>
            <person name="Hensch T.K."/>
            <person name="Hirokawa N."/>
            <person name="Hill D."/>
            <person name="Huminiecki L."/>
            <person name="Iacono M."/>
            <person name="Ikeo K."/>
            <person name="Iwama A."/>
            <person name="Ishikawa T."/>
            <person name="Jakt M."/>
            <person name="Kanapin A."/>
            <person name="Katoh M."/>
            <person name="Kawasawa Y."/>
            <person name="Kelso J."/>
            <person name="Kitamura H."/>
            <person name="Kitano H."/>
            <person name="Kollias G."/>
            <person name="Krishnan S.P."/>
            <person name="Kruger A."/>
            <person name="Kummerfeld S.K."/>
            <person name="Kurochkin I.V."/>
            <person name="Lareau L.F."/>
            <person name="Lazarevic D."/>
            <person name="Lipovich L."/>
            <person name="Liu J."/>
            <person name="Liuni S."/>
            <person name="McWilliam S."/>
            <person name="Madan Babu M."/>
            <person name="Madera M."/>
            <person name="Marchionni L."/>
            <person name="Matsuda H."/>
            <person name="Matsuzawa S."/>
            <person name="Miki H."/>
            <person name="Mignone F."/>
            <person name="Miyake S."/>
            <person name="Morris K."/>
            <person name="Mottagui-Tabar S."/>
            <person name="Mulder N."/>
            <person name="Nakano N."/>
            <person name="Nakauchi H."/>
            <person name="Ng P."/>
            <person name="Nilsson R."/>
            <person name="Nishiguchi S."/>
            <person name="Nishikawa S."/>
            <person name="Nori F."/>
            <person name="Ohara O."/>
            <person name="Okazaki Y."/>
            <person name="Orlando V."/>
            <person name="Pang K.C."/>
            <person name="Pavan W.J."/>
            <person name="Pavesi G."/>
            <person name="Pesole G."/>
            <person name="Petrovsky N."/>
            <person name="Piazza S."/>
            <person name="Reed J."/>
            <person name="Reid J.F."/>
            <person name="Ring B.Z."/>
            <person name="Ringwald M."/>
            <person name="Rost B."/>
            <person name="Ruan Y."/>
            <person name="Salzberg S.L."/>
            <person name="Sandelin A."/>
            <person name="Schneider C."/>
            <person name="Schoenbach C."/>
            <person name="Sekiguchi K."/>
            <person name="Semple C.A."/>
            <person name="Seno S."/>
            <person name="Sessa L."/>
            <person name="Sheng Y."/>
            <person name="Shibata Y."/>
            <person name="Shimada H."/>
            <person name="Shimada K."/>
            <person name="Silva D."/>
            <person name="Sinclair B."/>
            <person name="Sperling S."/>
            <person name="Stupka E."/>
            <person name="Sugiura K."/>
            <person name="Sultana R."/>
            <person name="Takenaka Y."/>
            <person name="Taki K."/>
            <person name="Tammoja K."/>
            <person name="Tan S.L."/>
            <person name="Tang S."/>
            <person name="Taylor M.S."/>
            <person name="Tegner J."/>
            <person name="Teichmann S.A."/>
            <person name="Ueda H.R."/>
            <person name="van Nimwegen E."/>
            <person name="Verardo R."/>
            <person name="Wei C.L."/>
            <person name="Yagi K."/>
            <person name="Yamanishi H."/>
            <person name="Zabarovsky E."/>
            <person name="Zhu S."/>
            <person name="Zimmer A."/>
            <person name="Hide W."/>
            <person name="Bult C."/>
            <person name="Grimmond S.M."/>
            <person name="Teasdale R.D."/>
            <person name="Liu E.T."/>
            <person name="Brusic V."/>
            <person name="Quackenbush J."/>
            <person name="Wahlestedt C."/>
            <person name="Mattick J.S."/>
            <person name="Hume D.A."/>
            <person name="Kai C."/>
            <person name="Sasaki D."/>
            <person name="Tomaru Y."/>
            <person name="Fukuda S."/>
            <person name="Kanamori-Katayama M."/>
            <person name="Suzuki M."/>
            <person name="Aoki J."/>
            <person name="Arakawa T."/>
            <person name="Iida J."/>
            <person name="Imamura K."/>
            <person name="Itoh M."/>
            <person name="Kato T."/>
            <person name="Kawaji H."/>
            <person name="Kawagashira N."/>
            <person name="Kawashima T."/>
            <person name="Kojima M."/>
            <person name="Kondo S."/>
            <person name="Konno H."/>
            <person name="Nakano K."/>
            <person name="Ninomiya N."/>
            <person name="Nishio T."/>
            <person name="Okada M."/>
            <person name="Plessy C."/>
            <person name="Shibata K."/>
            <person name="Shiraki T."/>
            <person name="Suzuki S."/>
            <person name="Tagami M."/>
            <person name="Waki K."/>
            <person name="Watahiki A."/>
            <person name="Okamura-Oho Y."/>
            <person name="Suzuki H."/>
            <person name="Kawai J."/>
            <person name="Hayashizaki Y."/>
        </authorList>
    </citation>
    <scope>NUCLEOTIDE SEQUENCE [LARGE SCALE MRNA] (ISOFORMS 1 AND 2)</scope>
    <source>
        <strain>C57BL/6J</strain>
        <tissue>Embryo</tissue>
        <tissue>Testis</tissue>
    </source>
</reference>
<reference key="2">
    <citation type="journal article" date="2004" name="Genome Res.">
        <title>The status, quality, and expansion of the NIH full-length cDNA project: the Mammalian Gene Collection (MGC).</title>
        <authorList>
            <consortium name="The MGC Project Team"/>
        </authorList>
    </citation>
    <scope>NUCLEOTIDE SEQUENCE [LARGE SCALE MRNA] (ISOFORM 1)</scope>
    <source>
        <strain>FVB/N</strain>
        <strain>FVB/N-3</strain>
        <tissue>Colon</tissue>
        <tissue>Mammary tumor</tissue>
    </source>
</reference>
<reference key="3">
    <citation type="journal article" date="2004" name="Mol. Cell. Proteomics">
        <title>Phosphoproteomic analysis of the developing mouse brain.</title>
        <authorList>
            <person name="Ballif B.A."/>
            <person name="Villen J."/>
            <person name="Beausoleil S.A."/>
            <person name="Schwartz D."/>
            <person name="Gygi S.P."/>
        </authorList>
    </citation>
    <scope>PHOSPHORYLATION [LARGE SCALE ANALYSIS] AT SER-43</scope>
    <scope>IDENTIFICATION BY MASS SPECTROMETRY [LARGE SCALE ANALYSIS]</scope>
    <source>
        <tissue>Embryonic brain</tissue>
    </source>
</reference>
<reference key="4">
    <citation type="journal article" date="2009" name="Immunity">
        <title>The phagosomal proteome in interferon-gamma-activated macrophages.</title>
        <authorList>
            <person name="Trost M."/>
            <person name="English L."/>
            <person name="Lemieux S."/>
            <person name="Courcelles M."/>
            <person name="Desjardins M."/>
            <person name="Thibault P."/>
        </authorList>
    </citation>
    <scope>PHOSPHORYLATION [LARGE SCALE ANALYSIS] AT SER-43</scope>
    <scope>IDENTIFICATION BY MASS SPECTROMETRY [LARGE SCALE ANALYSIS]</scope>
</reference>
<reference key="5">
    <citation type="journal article" date="2010" name="Cell">
        <title>A tissue-specific atlas of mouse protein phosphorylation and expression.</title>
        <authorList>
            <person name="Huttlin E.L."/>
            <person name="Jedrychowski M.P."/>
            <person name="Elias J.E."/>
            <person name="Goswami T."/>
            <person name="Rad R."/>
            <person name="Beausoleil S.A."/>
            <person name="Villen J."/>
            <person name="Haas W."/>
            <person name="Sowa M.E."/>
            <person name="Gygi S.P."/>
        </authorList>
    </citation>
    <scope>PHOSPHORYLATION [LARGE SCALE ANALYSIS] AT SER-43 AND THR-48</scope>
    <scope>IDENTIFICATION BY MASS SPECTROMETRY [LARGE SCALE ANALYSIS]</scope>
    <source>
        <tissue>Brain</tissue>
        <tissue>Brown adipose tissue</tissue>
        <tissue>Heart</tissue>
        <tissue>Kidney</tissue>
        <tissue>Liver</tissue>
        <tissue>Lung</tissue>
        <tissue>Pancreas</tissue>
        <tissue>Spleen</tissue>
        <tissue>Testis</tissue>
    </source>
</reference>
<protein>
    <recommendedName>
        <fullName>Armadillo repeat-containing protein 10</fullName>
    </recommendedName>
</protein>
<name>ARM10_MOUSE</name>
<accession>Q9D0L7</accession>
<accession>Q80ZY2</accession>
<accession>Q9CUN3</accession>
<accession>Q9CZ87</accession>
<sequence length="306" mass="33311">MGGARDVGWVAAGLVLGAGACYCIYRLTRGPRRGGRRLRPSRSAEDLTDGSYDDILNAEQLKKLLYLLESTDDPVITEKALVTLGNNAAFSTNQAIIRELGGIPIVGNKINSLNQSIKEKALNALNNLSVNVENQTKIKIYVPQVCEDVFADPLNSAVQLAGLRLLTNMTVTNDYQHLLSGSVAGLFHLLLLGNGSTKVQVLKLLLNLSENPAMTEGLLSVQVDSSFLSLYDGQVANEILLRALTLFQNINNCLKVEGRLANQIPFAKGSLFFLLYGEECAQKMRALACHHDVDVKEKALAIKPKF</sequence>
<dbReference type="EMBL" id="AK011303">
    <property type="protein sequence ID" value="BAB27529.1"/>
    <property type="molecule type" value="mRNA"/>
</dbReference>
<dbReference type="EMBL" id="AK012872">
    <property type="protein sequence ID" value="BAB28526.1"/>
    <property type="molecule type" value="mRNA"/>
</dbReference>
<dbReference type="EMBL" id="AK015272">
    <property type="protein sequence ID" value="BAB29775.1"/>
    <property type="status" value="ALT_FRAME"/>
    <property type="molecule type" value="mRNA"/>
</dbReference>
<dbReference type="EMBL" id="BC038487">
    <property type="protein sequence ID" value="AAH38487.1"/>
    <property type="molecule type" value="mRNA"/>
</dbReference>
<dbReference type="EMBL" id="BC046281">
    <property type="protein sequence ID" value="AAH46281.2"/>
    <property type="molecule type" value="mRNA"/>
</dbReference>
<dbReference type="EMBL" id="BC058573">
    <property type="protein sequence ID" value="AAH58573.1"/>
    <property type="molecule type" value="mRNA"/>
</dbReference>
<dbReference type="CCDS" id="CCDS19104.1">
    <molecule id="Q9D0L7-1"/>
</dbReference>
<dbReference type="RefSeq" id="NP_001350351.1">
    <molecule id="Q9D0L7-2"/>
    <property type="nucleotide sequence ID" value="NM_001363422.1"/>
</dbReference>
<dbReference type="RefSeq" id="NP_080310.1">
    <molecule id="Q9D0L7-1"/>
    <property type="nucleotide sequence ID" value="NM_026034.5"/>
</dbReference>
<dbReference type="SMR" id="Q9D0L7"/>
<dbReference type="BioGRID" id="212019">
    <property type="interactions" value="4"/>
</dbReference>
<dbReference type="FunCoup" id="Q9D0L7">
    <property type="interactions" value="4052"/>
</dbReference>
<dbReference type="STRING" id="10090.ENSMUSP00000072669"/>
<dbReference type="GlyGen" id="Q9D0L7">
    <property type="glycosylation" value="1 site, 1 N-linked glycan (1 site)"/>
</dbReference>
<dbReference type="iPTMnet" id="Q9D0L7"/>
<dbReference type="PhosphoSitePlus" id="Q9D0L7"/>
<dbReference type="SwissPalm" id="Q9D0L7"/>
<dbReference type="jPOST" id="Q9D0L7"/>
<dbReference type="PaxDb" id="10090-ENSMUSP00000072669"/>
<dbReference type="PeptideAtlas" id="Q9D0L7"/>
<dbReference type="ProteomicsDB" id="282022">
    <molecule id="Q9D0L7-1"/>
</dbReference>
<dbReference type="ProteomicsDB" id="282023">
    <molecule id="Q9D0L7-2"/>
</dbReference>
<dbReference type="Pumba" id="Q9D0L7"/>
<dbReference type="Antibodypedia" id="2627">
    <property type="antibodies" value="169 antibodies from 26 providers"/>
</dbReference>
<dbReference type="DNASU" id="67211"/>
<dbReference type="Ensembl" id="ENSMUST00000072896.13">
    <molecule id="Q9D0L7-1"/>
    <property type="protein sequence ID" value="ENSMUSP00000072669.7"/>
    <property type="gene ID" value="ENSMUSG00000038525.17"/>
</dbReference>
<dbReference type="Ensembl" id="ENSMUST00000148873.8">
    <molecule id="Q9D0L7-2"/>
    <property type="protein sequence ID" value="ENSMUSP00000120269.2"/>
    <property type="gene ID" value="ENSMUSG00000038525.17"/>
</dbReference>
<dbReference type="GeneID" id="67211"/>
<dbReference type="KEGG" id="mmu:67211"/>
<dbReference type="UCSC" id="uc008wos.1">
    <molecule id="Q9D0L7-1"/>
    <property type="organism name" value="mouse"/>
</dbReference>
<dbReference type="UCSC" id="uc008wot.1">
    <molecule id="Q9D0L7-2"/>
    <property type="organism name" value="mouse"/>
</dbReference>
<dbReference type="AGR" id="MGI:1914461"/>
<dbReference type="CTD" id="83787"/>
<dbReference type="MGI" id="MGI:1914461">
    <property type="gene designation" value="Armc10"/>
</dbReference>
<dbReference type="VEuPathDB" id="HostDB:ENSMUSG00000038525"/>
<dbReference type="eggNOG" id="ENOG502RZRU">
    <property type="taxonomic scope" value="Eukaryota"/>
</dbReference>
<dbReference type="GeneTree" id="ENSGT00940000159546"/>
<dbReference type="HOGENOM" id="CLU_037187_0_0_1"/>
<dbReference type="InParanoid" id="Q9D0L7"/>
<dbReference type="OMA" id="VTNDYHY"/>
<dbReference type="OrthoDB" id="10017790at2759"/>
<dbReference type="PhylomeDB" id="Q9D0L7"/>
<dbReference type="TreeFam" id="TF335652"/>
<dbReference type="BioGRID-ORCS" id="67211">
    <property type="hits" value="4 hits in 79 CRISPR screens"/>
</dbReference>
<dbReference type="CD-CODE" id="CE726F99">
    <property type="entry name" value="Postsynaptic density"/>
</dbReference>
<dbReference type="ChiTaRS" id="Armc10">
    <property type="organism name" value="mouse"/>
</dbReference>
<dbReference type="PRO" id="PR:Q9D0L7"/>
<dbReference type="Proteomes" id="UP000000589">
    <property type="component" value="Chromosome 5"/>
</dbReference>
<dbReference type="RNAct" id="Q9D0L7">
    <property type="molecule type" value="protein"/>
</dbReference>
<dbReference type="Bgee" id="ENSMUSG00000038525">
    <property type="expression patterns" value="Expressed in metanephric ureteric bud and 255 other cell types or tissues"/>
</dbReference>
<dbReference type="ExpressionAtlas" id="Q9D0L7">
    <property type="expression patterns" value="baseline and differential"/>
</dbReference>
<dbReference type="GO" id="GO:0005789">
    <property type="term" value="C:endoplasmic reticulum membrane"/>
    <property type="evidence" value="ECO:0007669"/>
    <property type="project" value="UniProtKB-SubCell"/>
</dbReference>
<dbReference type="GO" id="GO:0005741">
    <property type="term" value="C:mitochondrial outer membrane"/>
    <property type="evidence" value="ECO:0007669"/>
    <property type="project" value="UniProtKB-SubCell"/>
</dbReference>
<dbReference type="GO" id="GO:0005739">
    <property type="term" value="C:mitochondrion"/>
    <property type="evidence" value="ECO:0007005"/>
    <property type="project" value="MGI"/>
</dbReference>
<dbReference type="FunFam" id="1.25.10.10:FF:000443">
    <property type="entry name" value="Armadillo repeat-containing protein 10"/>
    <property type="match status" value="1"/>
</dbReference>
<dbReference type="Gene3D" id="1.25.10.10">
    <property type="entry name" value="Leucine-rich Repeat Variant"/>
    <property type="match status" value="1"/>
</dbReference>
<dbReference type="InterPro" id="IPR011989">
    <property type="entry name" value="ARM-like"/>
</dbReference>
<dbReference type="InterPro" id="IPR006911">
    <property type="entry name" value="ARM-rpt_dom"/>
</dbReference>
<dbReference type="InterPro" id="IPR016024">
    <property type="entry name" value="ARM-type_fold"/>
</dbReference>
<dbReference type="InterPro" id="IPR051303">
    <property type="entry name" value="Armcx_regulator"/>
</dbReference>
<dbReference type="PANTHER" id="PTHR15712">
    <property type="entry name" value="ARMADILLO REPEAT CONTAINING PROTEIN"/>
    <property type="match status" value="1"/>
</dbReference>
<dbReference type="PANTHER" id="PTHR15712:SF19">
    <property type="entry name" value="ARMADILLO REPEAT-CONTAINING PROTEIN 10"/>
    <property type="match status" value="1"/>
</dbReference>
<dbReference type="Pfam" id="PF04826">
    <property type="entry name" value="Arm_2"/>
    <property type="match status" value="1"/>
</dbReference>
<dbReference type="SUPFAM" id="SSF48371">
    <property type="entry name" value="ARM repeat"/>
    <property type="match status" value="1"/>
</dbReference>
<evidence type="ECO:0000250" key="1"/>
<evidence type="ECO:0000250" key="2">
    <source>
        <dbReference type="UniProtKB" id="Q8N2F6"/>
    </source>
</evidence>
<evidence type="ECO:0000255" key="3"/>
<evidence type="ECO:0000303" key="4">
    <source>
    </source>
</evidence>
<evidence type="ECO:0000305" key="5"/>
<evidence type="ECO:0007744" key="6">
    <source>
    </source>
</evidence>
<evidence type="ECO:0007744" key="7">
    <source>
    </source>
</evidence>
<evidence type="ECO:0007744" key="8">
    <source>
    </source>
</evidence>
<feature type="chain" id="PRO_0000297708" description="Armadillo repeat-containing protein 10">
    <location>
        <begin position="1"/>
        <end position="306"/>
    </location>
</feature>
<feature type="transmembrane region" description="Helical" evidence="3">
    <location>
        <begin position="7"/>
        <end position="29"/>
    </location>
</feature>
<feature type="repeat" description="ARM">
    <location>
        <begin position="101"/>
        <end position="143"/>
    </location>
</feature>
<feature type="modified residue" description="Phosphoserine" evidence="6 7 8">
    <location>
        <position position="43"/>
    </location>
</feature>
<feature type="modified residue" description="Phosphothreonine" evidence="8">
    <location>
        <position position="48"/>
    </location>
</feature>
<feature type="splice variant" id="VSP_027363" description="In isoform 2." evidence="4">
    <location>
        <begin position="44"/>
        <end position="57"/>
    </location>
</feature>
<feature type="sequence conflict" description="In Ref. 1; BAB29775." evidence="5" ref="1">
    <original>P</original>
    <variation>T</variation>
    <location>
        <position position="74"/>
    </location>
</feature>
<feature type="sequence conflict" description="In Ref. 1; BAB28526." evidence="5" ref="1">
    <original>L</original>
    <variation>P</variation>
    <location>
        <position position="191"/>
    </location>
</feature>
<gene>
    <name type="primary">Armc10</name>
</gene>
<keyword id="KW-0025">Alternative splicing</keyword>
<keyword id="KW-0256">Endoplasmic reticulum</keyword>
<keyword id="KW-0341">Growth regulation</keyword>
<keyword id="KW-0472">Membrane</keyword>
<keyword id="KW-0496">Mitochondrion</keyword>
<keyword id="KW-1000">Mitochondrion outer membrane</keyword>
<keyword id="KW-0597">Phosphoprotein</keyword>
<keyword id="KW-1185">Reference proteome</keyword>
<keyword id="KW-0812">Transmembrane</keyword>
<keyword id="KW-1133">Transmembrane helix</keyword>
<comment type="function">
    <text evidence="1">May play a role in cell survival and cell growth. May suppress the transcriptional activity of p53/TP53 (By similarity).</text>
</comment>
<comment type="subunit">
    <text evidence="1">Interacts with the DNA-binding domain of p53/TP53.</text>
</comment>
<comment type="subcellular location">
    <subcellularLocation>
        <location evidence="2">Endoplasmic reticulum membrane</location>
        <topology evidence="3">Single-pass membrane protein</topology>
    </subcellularLocation>
    <subcellularLocation>
        <location evidence="2">Mitochondrion outer membrane</location>
        <topology evidence="3">Single-pass membrane protein</topology>
    </subcellularLocation>
</comment>
<comment type="alternative products">
    <event type="alternative splicing"/>
    <isoform>
        <id>Q9D0L7-1</id>
        <name>1</name>
        <sequence type="displayed"/>
    </isoform>
    <isoform>
        <id>Q9D0L7-2</id>
        <name>2</name>
        <sequence type="described" ref="VSP_027363"/>
    </isoform>
</comment>
<comment type="sequence caution" evidence="5">
    <conflict type="frameshift">
        <sequence resource="EMBL-CDS" id="BAB29775"/>
    </conflict>
</comment>